<name>PSAB_SACHY</name>
<evidence type="ECO:0000255" key="1">
    <source>
        <dbReference type="HAMAP-Rule" id="MF_00482"/>
    </source>
</evidence>
<geneLocation type="chloroplast"/>
<proteinExistence type="inferred from homology"/>
<keyword id="KW-0004">4Fe-4S</keyword>
<keyword id="KW-0148">Chlorophyll</keyword>
<keyword id="KW-0150">Chloroplast</keyword>
<keyword id="KW-0157">Chromophore</keyword>
<keyword id="KW-0249">Electron transport</keyword>
<keyword id="KW-0408">Iron</keyword>
<keyword id="KW-0411">Iron-sulfur</keyword>
<keyword id="KW-0460">Magnesium</keyword>
<keyword id="KW-0472">Membrane</keyword>
<keyword id="KW-0479">Metal-binding</keyword>
<keyword id="KW-0560">Oxidoreductase</keyword>
<keyword id="KW-0602">Photosynthesis</keyword>
<keyword id="KW-0603">Photosystem I</keyword>
<keyword id="KW-0934">Plastid</keyword>
<keyword id="KW-0793">Thylakoid</keyword>
<keyword id="KW-0812">Transmembrane</keyword>
<keyword id="KW-1133">Transmembrane helix</keyword>
<keyword id="KW-0813">Transport</keyword>
<reference key="1">
    <citation type="journal article" date="2004" name="Curr. Genet.">
        <title>Structural features and transcript-editing analysis of sugarcane (Saccharum officinarum L.) chloroplast genome.</title>
        <authorList>
            <person name="Calsa T. Jr."/>
            <person name="Carraro D.M."/>
            <person name="Benatti M.R."/>
            <person name="Barbosa A.C."/>
            <person name="Kitajima J.P."/>
            <person name="Carrer H."/>
        </authorList>
    </citation>
    <scope>NUCLEOTIDE SEQUENCE [LARGE SCALE GENOMIC DNA]</scope>
    <source>
        <strain>cv. SP-80-3280</strain>
    </source>
</reference>
<protein>
    <recommendedName>
        <fullName evidence="1">Photosystem I P700 chlorophyll a apoprotein A2</fullName>
        <ecNumber evidence="1">1.97.1.12</ecNumber>
    </recommendedName>
    <alternativeName>
        <fullName evidence="1">PSI-B</fullName>
    </alternativeName>
    <alternativeName>
        <fullName evidence="1">PsaB</fullName>
    </alternativeName>
</protein>
<organism>
    <name type="scientific">Saccharum hybrid</name>
    <name type="common">Sugarcane</name>
    <dbReference type="NCBI Taxonomy" id="15819"/>
    <lineage>
        <taxon>Eukaryota</taxon>
        <taxon>Viridiplantae</taxon>
        <taxon>Streptophyta</taxon>
        <taxon>Embryophyta</taxon>
        <taxon>Tracheophyta</taxon>
        <taxon>Spermatophyta</taxon>
        <taxon>Magnoliopsida</taxon>
        <taxon>Liliopsida</taxon>
        <taxon>Poales</taxon>
        <taxon>Poaceae</taxon>
        <taxon>PACMAD clade</taxon>
        <taxon>Panicoideae</taxon>
        <taxon>Andropogonodae</taxon>
        <taxon>Andropogoneae</taxon>
        <taxon>Saccharinae</taxon>
        <taxon>Saccharum</taxon>
    </lineage>
</organism>
<comment type="function">
    <text evidence="1">PsaA and PsaB bind P700, the primary electron donor of photosystem I (PSI), as well as the electron acceptors A0, A1 and FX. PSI is a plastocyanin-ferredoxin oxidoreductase, converting photonic excitation into a charge separation, which transfers an electron from the donor P700 chlorophyll pair to the spectroscopically characterized acceptors A0, A1, FX, FA and FB in turn. Oxidized P700 is reduced on the lumenal side of the thylakoid membrane by plastocyanin.</text>
</comment>
<comment type="catalytic activity">
    <reaction evidence="1">
        <text>reduced [plastocyanin] + hnu + oxidized [2Fe-2S]-[ferredoxin] = oxidized [plastocyanin] + reduced [2Fe-2S]-[ferredoxin]</text>
        <dbReference type="Rhea" id="RHEA:30407"/>
        <dbReference type="Rhea" id="RHEA-COMP:10000"/>
        <dbReference type="Rhea" id="RHEA-COMP:10001"/>
        <dbReference type="Rhea" id="RHEA-COMP:10039"/>
        <dbReference type="Rhea" id="RHEA-COMP:10040"/>
        <dbReference type="ChEBI" id="CHEBI:29036"/>
        <dbReference type="ChEBI" id="CHEBI:30212"/>
        <dbReference type="ChEBI" id="CHEBI:33737"/>
        <dbReference type="ChEBI" id="CHEBI:33738"/>
        <dbReference type="ChEBI" id="CHEBI:49552"/>
        <dbReference type="EC" id="1.97.1.12"/>
    </reaction>
</comment>
<comment type="cofactor">
    <text evidence="1">P700 is a chlorophyll a/chlorophyll a' dimer, A0 is one or more chlorophyll a, A1 is one or both phylloquinones and FX is a shared 4Fe-4S iron-sulfur center.</text>
</comment>
<comment type="subunit">
    <text evidence="1">The PsaA/B heterodimer binds the P700 chlorophyll special pair and subsequent electron acceptors. PSI consists of a core antenna complex that captures photons, and an electron transfer chain that converts photonic excitation into a charge separation. The eukaryotic PSI reaction center is composed of at least 11 subunits.</text>
</comment>
<comment type="subcellular location">
    <subcellularLocation>
        <location evidence="1">Plastid</location>
        <location evidence="1">Chloroplast thylakoid membrane</location>
        <topology evidence="1">Multi-pass membrane protein</topology>
    </subcellularLocation>
</comment>
<comment type="similarity">
    <text evidence="1">Belongs to the PsaA/PsaB family.</text>
</comment>
<gene>
    <name evidence="1" type="primary">psaB</name>
    <name type="ordered locus">PS116</name>
</gene>
<feature type="chain" id="PRO_0000088636" description="Photosystem I P700 chlorophyll a apoprotein A2">
    <location>
        <begin position="1"/>
        <end position="734"/>
    </location>
</feature>
<feature type="transmembrane region" description="Helical; Name=I" evidence="1">
    <location>
        <begin position="46"/>
        <end position="69"/>
    </location>
</feature>
<feature type="transmembrane region" description="Helical; Name=II" evidence="1">
    <location>
        <begin position="135"/>
        <end position="158"/>
    </location>
</feature>
<feature type="transmembrane region" description="Helical; Name=III" evidence="1">
    <location>
        <begin position="175"/>
        <end position="199"/>
    </location>
</feature>
<feature type="transmembrane region" description="Helical; Name=IV" evidence="1">
    <location>
        <begin position="273"/>
        <end position="291"/>
    </location>
</feature>
<feature type="transmembrane region" description="Helical; Name=V" evidence="1">
    <location>
        <begin position="330"/>
        <end position="353"/>
    </location>
</feature>
<feature type="transmembrane region" description="Helical; Name=VI" evidence="1">
    <location>
        <begin position="369"/>
        <end position="395"/>
    </location>
</feature>
<feature type="transmembrane region" description="Helical; Name=VII" evidence="1">
    <location>
        <begin position="417"/>
        <end position="439"/>
    </location>
</feature>
<feature type="transmembrane region" description="Helical; Name=VIII" evidence="1">
    <location>
        <begin position="517"/>
        <end position="535"/>
    </location>
</feature>
<feature type="transmembrane region" description="Helical; Name=IX" evidence="1">
    <location>
        <begin position="575"/>
        <end position="596"/>
    </location>
</feature>
<feature type="transmembrane region" description="Helical; Name=X" evidence="1">
    <location>
        <begin position="643"/>
        <end position="665"/>
    </location>
</feature>
<feature type="transmembrane region" description="Helical; Name=XI" evidence="1">
    <location>
        <begin position="707"/>
        <end position="727"/>
    </location>
</feature>
<feature type="binding site" evidence="1">
    <location>
        <position position="559"/>
    </location>
    <ligand>
        <name>[4Fe-4S] cluster</name>
        <dbReference type="ChEBI" id="CHEBI:49883"/>
        <note>ligand shared between dimeric partners</note>
    </ligand>
</feature>
<feature type="binding site" evidence="1">
    <location>
        <position position="568"/>
    </location>
    <ligand>
        <name>[4Fe-4S] cluster</name>
        <dbReference type="ChEBI" id="CHEBI:49883"/>
        <note>ligand shared between dimeric partners</note>
    </ligand>
</feature>
<feature type="binding site" description="axial binding residue" evidence="1">
    <location>
        <position position="654"/>
    </location>
    <ligand>
        <name>chlorophyll a</name>
        <dbReference type="ChEBI" id="CHEBI:58416"/>
        <label>B1</label>
    </ligand>
    <ligandPart>
        <name>Mg</name>
        <dbReference type="ChEBI" id="CHEBI:25107"/>
    </ligandPart>
</feature>
<feature type="binding site" description="axial binding residue" evidence="1">
    <location>
        <position position="662"/>
    </location>
    <ligand>
        <name>chlorophyll a</name>
        <dbReference type="ChEBI" id="CHEBI:58416"/>
        <label>B3</label>
    </ligand>
    <ligandPart>
        <name>Mg</name>
        <dbReference type="ChEBI" id="CHEBI:25107"/>
    </ligandPart>
</feature>
<feature type="binding site" evidence="1">
    <location>
        <position position="670"/>
    </location>
    <ligand>
        <name>chlorophyll a</name>
        <dbReference type="ChEBI" id="CHEBI:58416"/>
        <label>B3</label>
    </ligand>
</feature>
<feature type="binding site" evidence="1">
    <location>
        <position position="671"/>
    </location>
    <ligand>
        <name>phylloquinone</name>
        <dbReference type="ChEBI" id="CHEBI:18067"/>
        <label>B</label>
    </ligand>
</feature>
<accession>Q6L399</accession>
<sequence length="734" mass="82570">MELRFPRFSQGLAQDPTTRRIWFGIATAHDFESHDDITEERLYQNIFASHFGQLAIIFLWTSGNLFHVAWQGNFESWIQDPLHVRPIAHAIWDPHFGQPAVEAFTRGGAAGPVNIAYSGVYQWWYTIGLRTNEDLYTGALFLLFLSTLSLIGGWLHLQPKWKPSLSWFKNAESRLNHHLSGLFGVSSLAWTGHLVHVAIPGSRGEYVRWNNFLDVLPYPQGLGPLLTGQWNLYAQNPDSSNHLFGTTQGAGTAILTLLGGFHPQTQSLWLTDIAHHHLAIAFIFLIAGHMYRTNFGIGHSIKDLLEAHTPPGGRLGRGHKGLYDTINNSIHFQLGLALASLGVITSLVAQHMYSLPAYAFIAQDFTTQAALYTHHQYIAGFIMTGAFAHGAIFFIRDYNPEQNEDNVLARMLDHKEAIISHLSWASLFLGFHTLGLYVHNDVMLAFGTPEKQILIEPIFAQWIQSAHGKTTYGFDILLSSTNGPAFNAGRNIWLPGWLNAVNENSNSLFLTIGPGDFLVHHAIALGLHTTTLILVKGALDARGSKLMPDKKDFGYSFPCDGPGRGGTCDISAWDAFYLAVFWMLNTIGWVTFYWHWKHITLWQGNVSQFNESSTYLMGWLRDYLWLNSSQLINGYNPFGMNSLSVWAWMFLFGHLVWATGFMFLISWRGYWQELIETLAWAHERTPLANLIRWRDKPVALSIVQARLVGLAHFSVGYIFTYAAFLIASTSGKFG</sequence>
<dbReference type="EC" id="1.97.1.12" evidence="1"/>
<dbReference type="EMBL" id="AE009947">
    <property type="protein sequence ID" value="AAT44693.1"/>
    <property type="molecule type" value="Genomic_DNA"/>
</dbReference>
<dbReference type="SMR" id="Q6L399"/>
<dbReference type="GO" id="GO:0009535">
    <property type="term" value="C:chloroplast thylakoid membrane"/>
    <property type="evidence" value="ECO:0007669"/>
    <property type="project" value="UniProtKB-SubCell"/>
</dbReference>
<dbReference type="GO" id="GO:0009522">
    <property type="term" value="C:photosystem I"/>
    <property type="evidence" value="ECO:0007669"/>
    <property type="project" value="UniProtKB-KW"/>
</dbReference>
<dbReference type="GO" id="GO:0051539">
    <property type="term" value="F:4 iron, 4 sulfur cluster binding"/>
    <property type="evidence" value="ECO:0007669"/>
    <property type="project" value="UniProtKB-KW"/>
</dbReference>
<dbReference type="GO" id="GO:0016168">
    <property type="term" value="F:chlorophyll binding"/>
    <property type="evidence" value="ECO:0007669"/>
    <property type="project" value="UniProtKB-KW"/>
</dbReference>
<dbReference type="GO" id="GO:0009055">
    <property type="term" value="F:electron transfer activity"/>
    <property type="evidence" value="ECO:0007669"/>
    <property type="project" value="UniProtKB-UniRule"/>
</dbReference>
<dbReference type="GO" id="GO:0000287">
    <property type="term" value="F:magnesium ion binding"/>
    <property type="evidence" value="ECO:0007669"/>
    <property type="project" value="UniProtKB-UniRule"/>
</dbReference>
<dbReference type="GO" id="GO:0016491">
    <property type="term" value="F:oxidoreductase activity"/>
    <property type="evidence" value="ECO:0007669"/>
    <property type="project" value="UniProtKB-KW"/>
</dbReference>
<dbReference type="GO" id="GO:0015979">
    <property type="term" value="P:photosynthesis"/>
    <property type="evidence" value="ECO:0007669"/>
    <property type="project" value="UniProtKB-UniRule"/>
</dbReference>
<dbReference type="FunFam" id="1.20.1130.10:FF:000001">
    <property type="entry name" value="Photosystem I P700 chlorophyll a apoprotein A2"/>
    <property type="match status" value="1"/>
</dbReference>
<dbReference type="Gene3D" id="1.20.1130.10">
    <property type="entry name" value="Photosystem I PsaA/PsaB"/>
    <property type="match status" value="1"/>
</dbReference>
<dbReference type="HAMAP" id="MF_00482">
    <property type="entry name" value="PSI_PsaB"/>
    <property type="match status" value="1"/>
</dbReference>
<dbReference type="InterPro" id="IPR001280">
    <property type="entry name" value="PSI_PsaA/B"/>
</dbReference>
<dbReference type="InterPro" id="IPR020586">
    <property type="entry name" value="PSI_PsaA/B_CS"/>
</dbReference>
<dbReference type="InterPro" id="IPR036408">
    <property type="entry name" value="PSI_PsaA/B_sf"/>
</dbReference>
<dbReference type="InterPro" id="IPR006244">
    <property type="entry name" value="PSI_PsaB"/>
</dbReference>
<dbReference type="NCBIfam" id="TIGR01336">
    <property type="entry name" value="psaB"/>
    <property type="match status" value="1"/>
</dbReference>
<dbReference type="PANTHER" id="PTHR30128">
    <property type="entry name" value="OUTER MEMBRANE PROTEIN, OMPA-RELATED"/>
    <property type="match status" value="1"/>
</dbReference>
<dbReference type="PANTHER" id="PTHR30128:SF19">
    <property type="entry name" value="PHOTOSYSTEM I P700 CHLOROPHYLL A APOPROTEIN A1-RELATED"/>
    <property type="match status" value="1"/>
</dbReference>
<dbReference type="Pfam" id="PF00223">
    <property type="entry name" value="PsaA_PsaB"/>
    <property type="match status" value="1"/>
</dbReference>
<dbReference type="PIRSF" id="PIRSF002905">
    <property type="entry name" value="PSI_A"/>
    <property type="match status" value="1"/>
</dbReference>
<dbReference type="PRINTS" id="PR00257">
    <property type="entry name" value="PHOTSYSPSAAB"/>
</dbReference>
<dbReference type="SUPFAM" id="SSF81558">
    <property type="entry name" value="Photosystem I subunits PsaA/PsaB"/>
    <property type="match status" value="1"/>
</dbReference>
<dbReference type="PROSITE" id="PS00419">
    <property type="entry name" value="PHOTOSYSTEM_I_PSAAB"/>
    <property type="match status" value="1"/>
</dbReference>